<reference key="1">
    <citation type="journal article" date="2006" name="Proc. Natl. Acad. Sci. U.S.A.">
        <title>Molecular genetic anatomy of inter- and intraserotype variation in the human bacterial pathogen group A Streptococcus.</title>
        <authorList>
            <person name="Beres S.B."/>
            <person name="Richter E.W."/>
            <person name="Nagiec M.J."/>
            <person name="Sumby P."/>
            <person name="Porcella S.F."/>
            <person name="DeLeo F.R."/>
            <person name="Musser J.M."/>
        </authorList>
    </citation>
    <scope>NUCLEOTIDE SEQUENCE [LARGE SCALE GENOMIC DNA]</scope>
    <source>
        <strain>MGAS9429</strain>
    </source>
</reference>
<gene>
    <name evidence="1" type="primary">ezrA</name>
    <name type="ordered locus">MGAS9429_Spy0607</name>
</gene>
<evidence type="ECO:0000255" key="1">
    <source>
        <dbReference type="HAMAP-Rule" id="MF_00728"/>
    </source>
</evidence>
<keyword id="KW-0131">Cell cycle</keyword>
<keyword id="KW-0132">Cell division</keyword>
<keyword id="KW-1003">Cell membrane</keyword>
<keyword id="KW-0175">Coiled coil</keyword>
<keyword id="KW-0472">Membrane</keyword>
<keyword id="KW-0717">Septation</keyword>
<keyword id="KW-0812">Transmembrane</keyword>
<keyword id="KW-1133">Transmembrane helix</keyword>
<proteinExistence type="inferred from homology"/>
<accession>Q1JML7</accession>
<name>EZRA_STRPC</name>
<comment type="function">
    <text evidence="1">Negative regulator of FtsZ ring formation; modulates the frequency and position of FtsZ ring formation. Inhibits FtsZ ring formation at polar sites. Interacts either with FtsZ or with one of its binding partners to promote depolymerization.</text>
</comment>
<comment type="subcellular location">
    <subcellularLocation>
        <location evidence="1">Cell membrane</location>
        <topology evidence="1">Single-pass membrane protein</topology>
    </subcellularLocation>
    <text evidence="1">Colocalized with FtsZ to the nascent septal site.</text>
</comment>
<comment type="similarity">
    <text evidence="1">Belongs to the EzrA family.</text>
</comment>
<dbReference type="EMBL" id="CP000259">
    <property type="protein sequence ID" value="ABF31795.1"/>
    <property type="molecule type" value="Genomic_DNA"/>
</dbReference>
<dbReference type="RefSeq" id="WP_002990455.1">
    <property type="nucleotide sequence ID" value="NC_008021.1"/>
</dbReference>
<dbReference type="SMR" id="Q1JML7"/>
<dbReference type="GeneID" id="69901136"/>
<dbReference type="KEGG" id="spk:MGAS9429_Spy0607"/>
<dbReference type="HOGENOM" id="CLU_034079_2_0_9"/>
<dbReference type="Proteomes" id="UP000002433">
    <property type="component" value="Chromosome"/>
</dbReference>
<dbReference type="GO" id="GO:0005886">
    <property type="term" value="C:plasma membrane"/>
    <property type="evidence" value="ECO:0007669"/>
    <property type="project" value="UniProtKB-SubCell"/>
</dbReference>
<dbReference type="GO" id="GO:0005940">
    <property type="term" value="C:septin ring"/>
    <property type="evidence" value="ECO:0007669"/>
    <property type="project" value="InterPro"/>
</dbReference>
<dbReference type="GO" id="GO:0000917">
    <property type="term" value="P:division septum assembly"/>
    <property type="evidence" value="ECO:0007669"/>
    <property type="project" value="UniProtKB-KW"/>
</dbReference>
<dbReference type="GO" id="GO:0000921">
    <property type="term" value="P:septin ring assembly"/>
    <property type="evidence" value="ECO:0007669"/>
    <property type="project" value="InterPro"/>
</dbReference>
<dbReference type="HAMAP" id="MF_00728">
    <property type="entry name" value="EzrA"/>
    <property type="match status" value="1"/>
</dbReference>
<dbReference type="InterPro" id="IPR010379">
    <property type="entry name" value="EzrA"/>
</dbReference>
<dbReference type="NCBIfam" id="NF003407">
    <property type="entry name" value="PRK04778.1-1"/>
    <property type="match status" value="1"/>
</dbReference>
<dbReference type="NCBIfam" id="NF003410">
    <property type="entry name" value="PRK04778.1-4"/>
    <property type="match status" value="1"/>
</dbReference>
<dbReference type="Pfam" id="PF06160">
    <property type="entry name" value="EzrA"/>
    <property type="match status" value="1"/>
</dbReference>
<sequence length="574" mass="66062">MSSGIILLIVAIVLLVIIAYLVGVIIRKRNDSLITSLEERKQALFALPVNDEIEEVKSLHLIGQSQTSFREWNQKWVDLTVNSFADIENHIFEAENLNDTFNFIRAKHEINSVESQLNLVEEDIASIREALNILKEQEEKNSARVTHALDLYEKLQASISENEDNFGSTMPEIDKQMKNIETEFSQFVALNSSGDPVEASEVLDRAEEHTIALGQITEQIPAIVAKLEDDFPDQLDDLETGYRRLLEENYHFPEKNIEARFQEIRESIRANSSELVTLDLDRAREENTHIQERIDSLYEVFEREIAAYKVAAKNSKMLPRYLAHVKRNNEQLKDEIARLSRKYILSETESLTVKAFEKDIKEIEDSTLAVAEQFGLQEKPFSELQVTFERSIKTLTNVESGQMDVFAAVKDIEKIESQARHNLDVYVTQLHMIKRYMEKRHLPGIPQDFLSAFFTTSSQLEALMDELSRGRINIEAVSRLSEVATVAIANLEDLTYQVVQNATLTEQLLQYSNRYRSFEAGVQSSFEHALRLFEVENDYQASFDEISYALETVEPGVTDRFVNSYEKTREHIRF</sequence>
<organism>
    <name type="scientific">Streptococcus pyogenes serotype M12 (strain MGAS9429)</name>
    <dbReference type="NCBI Taxonomy" id="370551"/>
    <lineage>
        <taxon>Bacteria</taxon>
        <taxon>Bacillati</taxon>
        <taxon>Bacillota</taxon>
        <taxon>Bacilli</taxon>
        <taxon>Lactobacillales</taxon>
        <taxon>Streptococcaceae</taxon>
        <taxon>Streptococcus</taxon>
    </lineage>
</organism>
<protein>
    <recommendedName>
        <fullName evidence="1">Septation ring formation regulator EzrA</fullName>
    </recommendedName>
</protein>
<feature type="chain" id="PRO_1000045908" description="Septation ring formation regulator EzrA">
    <location>
        <begin position="1"/>
        <end position="574"/>
    </location>
</feature>
<feature type="topological domain" description="Extracellular" evidence="1">
    <location>
        <begin position="1"/>
        <end position="7"/>
    </location>
</feature>
<feature type="transmembrane region" description="Helical" evidence="1">
    <location>
        <begin position="8"/>
        <end position="26"/>
    </location>
</feature>
<feature type="topological domain" description="Cytoplasmic" evidence="1">
    <location>
        <begin position="27"/>
        <end position="574"/>
    </location>
</feature>
<feature type="coiled-coil region" evidence="1">
    <location>
        <begin position="102"/>
        <end position="141"/>
    </location>
</feature>
<feature type="coiled-coil region" evidence="1">
    <location>
        <begin position="274"/>
        <end position="350"/>
    </location>
</feature>
<feature type="coiled-coil region" evidence="1">
    <location>
        <begin position="459"/>
        <end position="520"/>
    </location>
</feature>